<sequence>MSGNAECHFSIWAILAFLGLALTISLIFNIFHCVEKQRQEKICTYSDDYFPREDEYDLEDSPIYGNVDNVALEPVDENCYEQMKARPDRSVNKLQDAPPSQETAVRVCYASLDHNNEGKRRKPRKQKSHLSDKDEEGQMHAKDISLSKTTLVDSYPPESEAIEENIHDDPIRLFGLIRAQKESLHSLDYDLAQ</sequence>
<proteinExistence type="evidence at transcript level"/>
<name>TRAT1_BOVIN</name>
<protein>
    <recommendedName>
        <fullName>T-cell receptor-associated transmembrane adapter 1</fullName>
    </recommendedName>
    <alternativeName>
        <fullName>T-cell receptor-interacting molecule</fullName>
        <shortName>TRIM</shortName>
    </alternativeName>
</protein>
<dbReference type="EMBL" id="BC103345">
    <property type="protein sequence ID" value="AAI03346.1"/>
    <property type="molecule type" value="mRNA"/>
</dbReference>
<dbReference type="RefSeq" id="NP_001157415.1">
    <property type="nucleotide sequence ID" value="NM_001163943.1"/>
</dbReference>
<dbReference type="FunCoup" id="Q3SYX1">
    <property type="interactions" value="158"/>
</dbReference>
<dbReference type="STRING" id="9913.ENSBTAP00000071996"/>
<dbReference type="PaxDb" id="9913-ENSBTAP00000034426"/>
<dbReference type="GeneID" id="614942"/>
<dbReference type="KEGG" id="bta:614942"/>
<dbReference type="CTD" id="50852"/>
<dbReference type="eggNOG" id="ENOG502S7P1">
    <property type="taxonomic scope" value="Eukaryota"/>
</dbReference>
<dbReference type="InParanoid" id="Q3SYX1"/>
<dbReference type="OrthoDB" id="8952491at2759"/>
<dbReference type="Proteomes" id="UP000009136">
    <property type="component" value="Unplaced"/>
</dbReference>
<dbReference type="GO" id="GO:0042101">
    <property type="term" value="C:T cell receptor complex"/>
    <property type="evidence" value="ECO:0000318"/>
    <property type="project" value="GO_Central"/>
</dbReference>
<dbReference type="GO" id="GO:0002250">
    <property type="term" value="P:adaptive immune response"/>
    <property type="evidence" value="ECO:0007669"/>
    <property type="project" value="UniProtKB-KW"/>
</dbReference>
<dbReference type="GO" id="GO:0001920">
    <property type="term" value="P:negative regulation of receptor recycling"/>
    <property type="evidence" value="ECO:0000318"/>
    <property type="project" value="GO_Central"/>
</dbReference>
<dbReference type="GO" id="GO:0050862">
    <property type="term" value="P:positive regulation of T cell receptor signaling pathway"/>
    <property type="evidence" value="ECO:0000318"/>
    <property type="project" value="GO_Central"/>
</dbReference>
<dbReference type="InterPro" id="IPR020399">
    <property type="entry name" value="T-cell_rcpt-assoc_TM_adapter-1"/>
</dbReference>
<dbReference type="PANTHER" id="PTHR15951">
    <property type="entry name" value="T-CELL RECEPTOR-ASSOCIATED TRANSMEMBRANE ADAPTER 1"/>
    <property type="match status" value="1"/>
</dbReference>
<dbReference type="PANTHER" id="PTHR15951:SF2">
    <property type="entry name" value="T-CELL RECEPTOR-ASSOCIATED TRANSMEMBRANE ADAPTER 1"/>
    <property type="match status" value="1"/>
</dbReference>
<dbReference type="Pfam" id="PF15330">
    <property type="entry name" value="SIT"/>
    <property type="match status" value="1"/>
</dbReference>
<organism>
    <name type="scientific">Bos taurus</name>
    <name type="common">Bovine</name>
    <dbReference type="NCBI Taxonomy" id="9913"/>
    <lineage>
        <taxon>Eukaryota</taxon>
        <taxon>Metazoa</taxon>
        <taxon>Chordata</taxon>
        <taxon>Craniata</taxon>
        <taxon>Vertebrata</taxon>
        <taxon>Euteleostomi</taxon>
        <taxon>Mammalia</taxon>
        <taxon>Eutheria</taxon>
        <taxon>Laurasiatheria</taxon>
        <taxon>Artiodactyla</taxon>
        <taxon>Ruminantia</taxon>
        <taxon>Pecora</taxon>
        <taxon>Bovidae</taxon>
        <taxon>Bovinae</taxon>
        <taxon>Bos</taxon>
    </lineage>
</organism>
<comment type="function">
    <text evidence="1">Stabilizes the TCR (T-cell antigen receptor)/CD3 complex at the surface of T-cells.</text>
</comment>
<comment type="subunit">
    <text evidence="1">Homodimer; disulfide-linked. Interacts with CD3Z. When phosphorylated, interacts with PIK3R1 (By similarity).</text>
</comment>
<comment type="subcellular location">
    <subcellularLocation>
        <location evidence="1">Cell membrane</location>
        <topology evidence="1">Single-pass type III membrane protein</topology>
    </subcellularLocation>
</comment>
<comment type="PTM">
    <text evidence="1">Phosphorylated on tyrosines upon TCR activation.</text>
</comment>
<reference key="1">
    <citation type="submission" date="2005-08" db="EMBL/GenBank/DDBJ databases">
        <authorList>
            <consortium name="NIH - Mammalian Gene Collection (MGC) project"/>
        </authorList>
    </citation>
    <scope>NUCLEOTIDE SEQUENCE [LARGE SCALE MRNA]</scope>
    <source>
        <strain>Crossbred X Angus</strain>
        <tissue>Ileum</tissue>
    </source>
</reference>
<accession>Q3SYX1</accession>
<gene>
    <name type="primary">TRAT1</name>
</gene>
<feature type="chain" id="PRO_0000083343" description="T-cell receptor-associated transmembrane adapter 1">
    <location>
        <begin position="1"/>
        <end position="193"/>
    </location>
</feature>
<feature type="topological domain" description="Extracellular" evidence="4">
    <location>
        <begin position="1"/>
        <end position="10"/>
    </location>
</feature>
<feature type="transmembrane region" description="Helical; Signal-anchor for type III membrane protein" evidence="4">
    <location>
        <begin position="11"/>
        <end position="31"/>
    </location>
</feature>
<feature type="topological domain" description="Cytoplasmic" evidence="4">
    <location>
        <begin position="32"/>
        <end position="193"/>
    </location>
</feature>
<feature type="region of interest" description="Interaction with PIK3R1" evidence="1">
    <location>
        <begin position="80"/>
        <end position="83"/>
    </location>
</feature>
<feature type="region of interest" description="Disordered" evidence="5">
    <location>
        <begin position="116"/>
        <end position="166"/>
    </location>
</feature>
<feature type="compositionally biased region" description="Basic residues" evidence="5">
    <location>
        <begin position="119"/>
        <end position="128"/>
    </location>
</feature>
<feature type="compositionally biased region" description="Basic and acidic residues" evidence="5">
    <location>
        <begin position="129"/>
        <end position="145"/>
    </location>
</feature>
<feature type="modified residue" description="Phosphoserine" evidence="2">
    <location>
        <position position="46"/>
    </location>
</feature>
<feature type="modified residue" description="Phosphotyrosine" evidence="3">
    <location>
        <position position="80"/>
    </location>
</feature>
<feature type="disulfide bond" description="Interchain" evidence="1">
    <location>
        <position position="7"/>
    </location>
</feature>
<evidence type="ECO:0000250" key="1"/>
<evidence type="ECO:0000250" key="2">
    <source>
        <dbReference type="UniProtKB" id="Q3UU67"/>
    </source>
</evidence>
<evidence type="ECO:0000250" key="3">
    <source>
        <dbReference type="UniProtKB" id="Q6PIZ9"/>
    </source>
</evidence>
<evidence type="ECO:0000255" key="4"/>
<evidence type="ECO:0000256" key="5">
    <source>
        <dbReference type="SAM" id="MobiDB-lite"/>
    </source>
</evidence>
<keyword id="KW-1064">Adaptive immunity</keyword>
<keyword id="KW-1003">Cell membrane</keyword>
<keyword id="KW-1015">Disulfide bond</keyword>
<keyword id="KW-0391">Immunity</keyword>
<keyword id="KW-0472">Membrane</keyword>
<keyword id="KW-0597">Phosphoprotein</keyword>
<keyword id="KW-1185">Reference proteome</keyword>
<keyword id="KW-0735">Signal-anchor</keyword>
<keyword id="KW-0812">Transmembrane</keyword>
<keyword id="KW-1133">Transmembrane helix</keyword>